<sequence length="384" mass="42092">MAKHLFTSESVSEGHPDKIADQISDAVLDAILEQDPKARVACETYVKTGMVMVGGEITTSAWVDIEELTRETVREIGYVHSDMGFDANSCAVLNTIGKQSPDINQGVDKADPKEQGAGDQGIMFGYACNETEVLMPAPITYAHRLMERQAKVRKDGTLPWLRPDAKSQVTFQYEQGKIVGIDAVVLSTQHCDSISTPDLREAVMEEIIKPVLPSEWLNKETKYFINPTGRFVIGGPMGDCGLTGRKIIVDTYGGAARHGGGAFSGKDPSKVDRSAAYAARYVAKNIVAAGMADRCEIQLSYAIGVADPTSIMVETFGTEKVSHDIIIEAVRQFFDLRPYGLQEMLNLLQPIYKKTAAYGHFGREEFPWEATDKAALLREFAGIK</sequence>
<proteinExistence type="inferred from homology"/>
<reference key="1">
    <citation type="journal article" date="2003" name="Genome Res.">
        <title>Comparative genome analysis of Vibrio vulnificus, a marine pathogen.</title>
        <authorList>
            <person name="Chen C.-Y."/>
            <person name="Wu K.-M."/>
            <person name="Chang Y.-C."/>
            <person name="Chang C.-H."/>
            <person name="Tsai H.-C."/>
            <person name="Liao T.-L."/>
            <person name="Liu Y.-M."/>
            <person name="Chen H.-J."/>
            <person name="Shen A.B.-T."/>
            <person name="Li J.-C."/>
            <person name="Su T.-L."/>
            <person name="Shao C.-P."/>
            <person name="Lee C.-T."/>
            <person name="Hor L.-I."/>
            <person name="Tsai S.-F."/>
        </authorList>
    </citation>
    <scope>NUCLEOTIDE SEQUENCE [LARGE SCALE GENOMIC DNA]</scope>
    <source>
        <strain>YJ016</strain>
    </source>
</reference>
<comment type="function">
    <text evidence="1">Catalyzes the formation of S-adenosylmethionine (AdoMet) from methionine and ATP. The overall synthetic reaction is composed of two sequential steps, AdoMet formation and the subsequent tripolyphosphate hydrolysis which occurs prior to release of AdoMet from the enzyme.</text>
</comment>
<comment type="catalytic activity">
    <reaction evidence="1">
        <text>L-methionine + ATP + H2O = S-adenosyl-L-methionine + phosphate + diphosphate</text>
        <dbReference type="Rhea" id="RHEA:21080"/>
        <dbReference type="ChEBI" id="CHEBI:15377"/>
        <dbReference type="ChEBI" id="CHEBI:30616"/>
        <dbReference type="ChEBI" id="CHEBI:33019"/>
        <dbReference type="ChEBI" id="CHEBI:43474"/>
        <dbReference type="ChEBI" id="CHEBI:57844"/>
        <dbReference type="ChEBI" id="CHEBI:59789"/>
        <dbReference type="EC" id="2.5.1.6"/>
    </reaction>
</comment>
<comment type="cofactor">
    <cofactor evidence="1">
        <name>Mg(2+)</name>
        <dbReference type="ChEBI" id="CHEBI:18420"/>
    </cofactor>
    <text evidence="1">Binds 2 divalent ions per subunit.</text>
</comment>
<comment type="cofactor">
    <cofactor evidence="1">
        <name>K(+)</name>
        <dbReference type="ChEBI" id="CHEBI:29103"/>
    </cofactor>
    <text evidence="1">Binds 1 potassium ion per subunit.</text>
</comment>
<comment type="pathway">
    <text evidence="1">Amino-acid biosynthesis; S-adenosyl-L-methionine biosynthesis; S-adenosyl-L-methionine from L-methionine: step 1/1.</text>
</comment>
<comment type="subunit">
    <text evidence="1">Homotetramer; dimer of dimers.</text>
</comment>
<comment type="subcellular location">
    <subcellularLocation>
        <location evidence="1">Cytoplasm</location>
    </subcellularLocation>
</comment>
<comment type="similarity">
    <text evidence="1">Belongs to the AdoMet synthase family.</text>
</comment>
<keyword id="KW-0067">ATP-binding</keyword>
<keyword id="KW-0963">Cytoplasm</keyword>
<keyword id="KW-0460">Magnesium</keyword>
<keyword id="KW-0479">Metal-binding</keyword>
<keyword id="KW-0547">Nucleotide-binding</keyword>
<keyword id="KW-0554">One-carbon metabolism</keyword>
<keyword id="KW-0630">Potassium</keyword>
<keyword id="KW-0808">Transferase</keyword>
<evidence type="ECO:0000255" key="1">
    <source>
        <dbReference type="HAMAP-Rule" id="MF_00086"/>
    </source>
</evidence>
<feature type="chain" id="PRO_0000174623" description="S-adenosylmethionine synthase">
    <location>
        <begin position="1"/>
        <end position="384"/>
    </location>
</feature>
<feature type="region of interest" description="Flexible loop" evidence="1">
    <location>
        <begin position="99"/>
        <end position="109"/>
    </location>
</feature>
<feature type="binding site" description="in other chain" evidence="1">
    <location>
        <position position="15"/>
    </location>
    <ligand>
        <name>ATP</name>
        <dbReference type="ChEBI" id="CHEBI:30616"/>
        <note>ligand shared between two neighboring subunits</note>
    </ligand>
</feature>
<feature type="binding site" evidence="1">
    <location>
        <position position="17"/>
    </location>
    <ligand>
        <name>Mg(2+)</name>
        <dbReference type="ChEBI" id="CHEBI:18420"/>
    </ligand>
</feature>
<feature type="binding site" evidence="1">
    <location>
        <position position="43"/>
    </location>
    <ligand>
        <name>K(+)</name>
        <dbReference type="ChEBI" id="CHEBI:29103"/>
    </ligand>
</feature>
<feature type="binding site" description="in other chain" evidence="1">
    <location>
        <position position="56"/>
    </location>
    <ligand>
        <name>L-methionine</name>
        <dbReference type="ChEBI" id="CHEBI:57844"/>
        <note>ligand shared between two neighboring subunits</note>
    </ligand>
</feature>
<feature type="binding site" description="in other chain" evidence="1">
    <location>
        <position position="99"/>
    </location>
    <ligand>
        <name>L-methionine</name>
        <dbReference type="ChEBI" id="CHEBI:57844"/>
        <note>ligand shared between two neighboring subunits</note>
    </ligand>
</feature>
<feature type="binding site" description="in other chain" evidence="1">
    <location>
        <begin position="164"/>
        <end position="166"/>
    </location>
    <ligand>
        <name>ATP</name>
        <dbReference type="ChEBI" id="CHEBI:30616"/>
        <note>ligand shared between two neighboring subunits</note>
    </ligand>
</feature>
<feature type="binding site" description="in other chain" evidence="1">
    <location>
        <begin position="230"/>
        <end position="231"/>
    </location>
    <ligand>
        <name>ATP</name>
        <dbReference type="ChEBI" id="CHEBI:30616"/>
        <note>ligand shared between two neighboring subunits</note>
    </ligand>
</feature>
<feature type="binding site" evidence="1">
    <location>
        <position position="239"/>
    </location>
    <ligand>
        <name>ATP</name>
        <dbReference type="ChEBI" id="CHEBI:30616"/>
        <note>ligand shared between two neighboring subunits</note>
    </ligand>
</feature>
<feature type="binding site" evidence="1">
    <location>
        <position position="239"/>
    </location>
    <ligand>
        <name>L-methionine</name>
        <dbReference type="ChEBI" id="CHEBI:57844"/>
        <note>ligand shared between two neighboring subunits</note>
    </ligand>
</feature>
<feature type="binding site" description="in other chain" evidence="1">
    <location>
        <begin position="245"/>
        <end position="246"/>
    </location>
    <ligand>
        <name>ATP</name>
        <dbReference type="ChEBI" id="CHEBI:30616"/>
        <note>ligand shared between two neighboring subunits</note>
    </ligand>
</feature>
<feature type="binding site" evidence="1">
    <location>
        <position position="262"/>
    </location>
    <ligand>
        <name>ATP</name>
        <dbReference type="ChEBI" id="CHEBI:30616"/>
        <note>ligand shared between two neighboring subunits</note>
    </ligand>
</feature>
<feature type="binding site" evidence="1">
    <location>
        <position position="266"/>
    </location>
    <ligand>
        <name>ATP</name>
        <dbReference type="ChEBI" id="CHEBI:30616"/>
        <note>ligand shared between two neighboring subunits</note>
    </ligand>
</feature>
<feature type="binding site" description="in other chain" evidence="1">
    <location>
        <position position="270"/>
    </location>
    <ligand>
        <name>L-methionine</name>
        <dbReference type="ChEBI" id="CHEBI:57844"/>
        <note>ligand shared between two neighboring subunits</note>
    </ligand>
</feature>
<protein>
    <recommendedName>
        <fullName evidence="1">S-adenosylmethionine synthase</fullName>
        <shortName evidence="1">AdoMet synthase</shortName>
        <ecNumber evidence="1">2.5.1.6</ecNumber>
    </recommendedName>
    <alternativeName>
        <fullName evidence="1">MAT</fullName>
    </alternativeName>
    <alternativeName>
        <fullName evidence="1">Methionine adenosyltransferase</fullName>
    </alternativeName>
</protein>
<name>METK_VIBVY</name>
<accession>Q7MHK6</accession>
<gene>
    <name evidence="1" type="primary">metK</name>
    <name type="ordered locus">VV2863</name>
</gene>
<organism>
    <name type="scientific">Vibrio vulnificus (strain YJ016)</name>
    <dbReference type="NCBI Taxonomy" id="196600"/>
    <lineage>
        <taxon>Bacteria</taxon>
        <taxon>Pseudomonadati</taxon>
        <taxon>Pseudomonadota</taxon>
        <taxon>Gammaproteobacteria</taxon>
        <taxon>Vibrionales</taxon>
        <taxon>Vibrionaceae</taxon>
        <taxon>Vibrio</taxon>
    </lineage>
</organism>
<dbReference type="EC" id="2.5.1.6" evidence="1"/>
<dbReference type="EMBL" id="BA000037">
    <property type="protein sequence ID" value="BAC95627.1"/>
    <property type="molecule type" value="Genomic_DNA"/>
</dbReference>
<dbReference type="RefSeq" id="WP_011079472.1">
    <property type="nucleotide sequence ID" value="NC_005139.1"/>
</dbReference>
<dbReference type="SMR" id="Q7MHK6"/>
<dbReference type="STRING" id="672.VV93_v1c25690"/>
<dbReference type="GeneID" id="93895792"/>
<dbReference type="KEGG" id="vvy:VV2863"/>
<dbReference type="eggNOG" id="COG0192">
    <property type="taxonomic scope" value="Bacteria"/>
</dbReference>
<dbReference type="HOGENOM" id="CLU_041802_1_1_6"/>
<dbReference type="UniPathway" id="UPA00315">
    <property type="reaction ID" value="UER00080"/>
</dbReference>
<dbReference type="Proteomes" id="UP000002675">
    <property type="component" value="Chromosome I"/>
</dbReference>
<dbReference type="GO" id="GO:0005737">
    <property type="term" value="C:cytoplasm"/>
    <property type="evidence" value="ECO:0007669"/>
    <property type="project" value="UniProtKB-SubCell"/>
</dbReference>
<dbReference type="GO" id="GO:0005524">
    <property type="term" value="F:ATP binding"/>
    <property type="evidence" value="ECO:0007669"/>
    <property type="project" value="UniProtKB-UniRule"/>
</dbReference>
<dbReference type="GO" id="GO:0000287">
    <property type="term" value="F:magnesium ion binding"/>
    <property type="evidence" value="ECO:0007669"/>
    <property type="project" value="UniProtKB-UniRule"/>
</dbReference>
<dbReference type="GO" id="GO:0004478">
    <property type="term" value="F:methionine adenosyltransferase activity"/>
    <property type="evidence" value="ECO:0007669"/>
    <property type="project" value="UniProtKB-UniRule"/>
</dbReference>
<dbReference type="GO" id="GO:0006730">
    <property type="term" value="P:one-carbon metabolic process"/>
    <property type="evidence" value="ECO:0007669"/>
    <property type="project" value="UniProtKB-KW"/>
</dbReference>
<dbReference type="GO" id="GO:0006556">
    <property type="term" value="P:S-adenosylmethionine biosynthetic process"/>
    <property type="evidence" value="ECO:0007669"/>
    <property type="project" value="UniProtKB-UniRule"/>
</dbReference>
<dbReference type="CDD" id="cd18079">
    <property type="entry name" value="S-AdoMet_synt"/>
    <property type="match status" value="1"/>
</dbReference>
<dbReference type="FunFam" id="3.30.300.10:FF:000001">
    <property type="entry name" value="S-adenosylmethionine synthase"/>
    <property type="match status" value="1"/>
</dbReference>
<dbReference type="FunFam" id="3.30.300.10:FF:000003">
    <property type="entry name" value="S-adenosylmethionine synthase"/>
    <property type="match status" value="1"/>
</dbReference>
<dbReference type="Gene3D" id="3.30.300.10">
    <property type="match status" value="3"/>
</dbReference>
<dbReference type="HAMAP" id="MF_00086">
    <property type="entry name" value="S_AdoMet_synth1"/>
    <property type="match status" value="1"/>
</dbReference>
<dbReference type="InterPro" id="IPR022631">
    <property type="entry name" value="ADOMET_SYNTHASE_CS"/>
</dbReference>
<dbReference type="InterPro" id="IPR022630">
    <property type="entry name" value="S-AdoMet_synt_C"/>
</dbReference>
<dbReference type="InterPro" id="IPR022629">
    <property type="entry name" value="S-AdoMet_synt_central"/>
</dbReference>
<dbReference type="InterPro" id="IPR022628">
    <property type="entry name" value="S-AdoMet_synt_N"/>
</dbReference>
<dbReference type="InterPro" id="IPR002133">
    <property type="entry name" value="S-AdoMet_synthetase"/>
</dbReference>
<dbReference type="InterPro" id="IPR022636">
    <property type="entry name" value="S-AdoMet_synthetase_sfam"/>
</dbReference>
<dbReference type="NCBIfam" id="TIGR01034">
    <property type="entry name" value="metK"/>
    <property type="match status" value="1"/>
</dbReference>
<dbReference type="PANTHER" id="PTHR11964">
    <property type="entry name" value="S-ADENOSYLMETHIONINE SYNTHETASE"/>
    <property type="match status" value="1"/>
</dbReference>
<dbReference type="Pfam" id="PF02773">
    <property type="entry name" value="S-AdoMet_synt_C"/>
    <property type="match status" value="1"/>
</dbReference>
<dbReference type="Pfam" id="PF02772">
    <property type="entry name" value="S-AdoMet_synt_M"/>
    <property type="match status" value="1"/>
</dbReference>
<dbReference type="Pfam" id="PF00438">
    <property type="entry name" value="S-AdoMet_synt_N"/>
    <property type="match status" value="1"/>
</dbReference>
<dbReference type="PIRSF" id="PIRSF000497">
    <property type="entry name" value="MAT"/>
    <property type="match status" value="1"/>
</dbReference>
<dbReference type="SUPFAM" id="SSF55973">
    <property type="entry name" value="S-adenosylmethionine synthetase"/>
    <property type="match status" value="3"/>
</dbReference>
<dbReference type="PROSITE" id="PS00376">
    <property type="entry name" value="ADOMET_SYNTHASE_1"/>
    <property type="match status" value="1"/>
</dbReference>
<dbReference type="PROSITE" id="PS00377">
    <property type="entry name" value="ADOMET_SYNTHASE_2"/>
    <property type="match status" value="1"/>
</dbReference>